<organism>
    <name type="scientific">Caenorhabditis briggsae</name>
    <dbReference type="NCBI Taxonomy" id="6238"/>
    <lineage>
        <taxon>Eukaryota</taxon>
        <taxon>Metazoa</taxon>
        <taxon>Ecdysozoa</taxon>
        <taxon>Nematoda</taxon>
        <taxon>Chromadorea</taxon>
        <taxon>Rhabditida</taxon>
        <taxon>Rhabditina</taxon>
        <taxon>Rhabditomorpha</taxon>
        <taxon>Rhabditoidea</taxon>
        <taxon>Rhabditidae</taxon>
        <taxon>Peloderinae</taxon>
        <taxon>Caenorhabditis</taxon>
    </lineage>
</organism>
<sequence length="181" mass="19662">MSKAIKQNLADSKKMSAELFCLTYGAMVTEMLKDYEDPKDVTVQLDKMGFNMGTRLADDFLAKNANVPRCVDTRQIADVLCRNAIPCYLGVSATASSWSSGDREFIITLESNPLTELVQVPPNLVSAGLSYSQMIAGAIRGALEAVHFKVYASAADSGANTEIRIRFDQVLKDSLPAGEDD</sequence>
<name>TPPC3_CAEBR</name>
<accession>Q61IU9</accession>
<accession>A8XAA6</accession>
<protein>
    <recommendedName>
        <fullName evidence="1">Trafficking protein particle complex subunit 3 homolog</fullName>
    </recommendedName>
</protein>
<keyword id="KW-0256">Endoplasmic reticulum</keyword>
<keyword id="KW-0931">ER-Golgi transport</keyword>
<keyword id="KW-0333">Golgi apparatus</keyword>
<keyword id="KW-0449">Lipoprotein</keyword>
<keyword id="KW-0564">Palmitate</keyword>
<keyword id="KW-1185">Reference proteome</keyword>
<keyword id="KW-0813">Transport</keyword>
<feature type="chain" id="PRO_0000211576" description="Trafficking protein particle complex subunit 3 homolog">
    <location>
        <begin position="1"/>
        <end position="181"/>
    </location>
</feature>
<feature type="lipid moiety-binding region" description="S-palmitoyl cysteine" evidence="1">
    <location>
        <position position="70"/>
    </location>
</feature>
<evidence type="ECO:0000250" key="1">
    <source>
        <dbReference type="UniProtKB" id="O43617"/>
    </source>
</evidence>
<evidence type="ECO:0000250" key="2">
    <source>
        <dbReference type="UniProtKB" id="P34605"/>
    </source>
</evidence>
<evidence type="ECO:0000250" key="3">
    <source>
        <dbReference type="UniProtKB" id="Q04183"/>
    </source>
</evidence>
<evidence type="ECO:0000250" key="4">
    <source>
        <dbReference type="UniProtKB" id="Q9CQP2"/>
    </source>
</evidence>
<evidence type="ECO:0000305" key="5"/>
<evidence type="ECO:0000312" key="6">
    <source>
        <dbReference type="WormBase" id="CBG10062"/>
    </source>
</evidence>
<proteinExistence type="inferred from homology"/>
<dbReference type="EMBL" id="HE601459">
    <property type="protein sequence ID" value="CAP29574.1"/>
    <property type="molecule type" value="Genomic_DNA"/>
</dbReference>
<dbReference type="RefSeq" id="XP_002641725.1">
    <property type="nucleotide sequence ID" value="XM_002641679.1"/>
</dbReference>
<dbReference type="SMR" id="Q61IU9"/>
<dbReference type="FunCoup" id="Q61IU9">
    <property type="interactions" value="2540"/>
</dbReference>
<dbReference type="STRING" id="6238.Q61IU9"/>
<dbReference type="EnsemblMetazoa" id="CBG10062.1">
    <property type="protein sequence ID" value="CBG10062.1"/>
    <property type="gene ID" value="WBGene00031543"/>
</dbReference>
<dbReference type="GeneID" id="8583719"/>
<dbReference type="KEGG" id="cbr:CBG_10062"/>
<dbReference type="CTD" id="8583719"/>
<dbReference type="WormBase" id="CBG10062">
    <property type="protein sequence ID" value="CBP02458"/>
    <property type="gene ID" value="WBGene00031543"/>
    <property type="gene designation" value="Cbr-trpp-3"/>
</dbReference>
<dbReference type="eggNOG" id="KOG3330">
    <property type="taxonomic scope" value="Eukaryota"/>
</dbReference>
<dbReference type="HOGENOM" id="CLU_087110_0_0_1"/>
<dbReference type="InParanoid" id="Q61IU9"/>
<dbReference type="OMA" id="MVQMQVQ"/>
<dbReference type="Proteomes" id="UP000008549">
    <property type="component" value="Unassembled WGS sequence"/>
</dbReference>
<dbReference type="GO" id="GO:0033106">
    <property type="term" value="C:cis-Golgi network membrane"/>
    <property type="evidence" value="ECO:0000318"/>
    <property type="project" value="GO_Central"/>
</dbReference>
<dbReference type="GO" id="GO:0005829">
    <property type="term" value="C:cytosol"/>
    <property type="evidence" value="ECO:0000318"/>
    <property type="project" value="GO_Central"/>
</dbReference>
<dbReference type="GO" id="GO:0005783">
    <property type="term" value="C:endoplasmic reticulum"/>
    <property type="evidence" value="ECO:0007669"/>
    <property type="project" value="UniProtKB-SubCell"/>
</dbReference>
<dbReference type="GO" id="GO:0030008">
    <property type="term" value="C:TRAPP complex"/>
    <property type="evidence" value="ECO:0000318"/>
    <property type="project" value="GO_Central"/>
</dbReference>
<dbReference type="GO" id="GO:0042338">
    <property type="term" value="P:cuticle development involved in collagen and cuticulin-based cuticle molting cycle"/>
    <property type="evidence" value="ECO:0007669"/>
    <property type="project" value="EnsemblMetazoa"/>
</dbReference>
<dbReference type="GO" id="GO:0006888">
    <property type="term" value="P:endoplasmic reticulum to Golgi vesicle-mediated transport"/>
    <property type="evidence" value="ECO:0000318"/>
    <property type="project" value="GO_Central"/>
</dbReference>
<dbReference type="GO" id="GO:0006891">
    <property type="term" value="P:intra-Golgi vesicle-mediated transport"/>
    <property type="evidence" value="ECO:0000318"/>
    <property type="project" value="GO_Central"/>
</dbReference>
<dbReference type="GO" id="GO:0035264">
    <property type="term" value="P:multicellular organism growth"/>
    <property type="evidence" value="ECO:0007669"/>
    <property type="project" value="EnsemblMetazoa"/>
</dbReference>
<dbReference type="GO" id="GO:0009306">
    <property type="term" value="P:protein secretion"/>
    <property type="evidence" value="ECO:0007669"/>
    <property type="project" value="EnsemblMetazoa"/>
</dbReference>
<dbReference type="CDD" id="cd14942">
    <property type="entry name" value="TRAPPC3_bet3"/>
    <property type="match status" value="1"/>
</dbReference>
<dbReference type="FunFam" id="3.30.1380.20:FF:000022">
    <property type="entry name" value="Trafficking protein particle complex subunit 3 homolog"/>
    <property type="match status" value="1"/>
</dbReference>
<dbReference type="Gene3D" id="3.30.1380.20">
    <property type="entry name" value="Trafficking protein particle complex subunit 3"/>
    <property type="match status" value="1"/>
</dbReference>
<dbReference type="InterPro" id="IPR016721">
    <property type="entry name" value="Bet3"/>
</dbReference>
<dbReference type="InterPro" id="IPR024096">
    <property type="entry name" value="NO_sig/Golgi_transp_ligand-bd"/>
</dbReference>
<dbReference type="InterPro" id="IPR007194">
    <property type="entry name" value="TRAPP_component"/>
</dbReference>
<dbReference type="PANTHER" id="PTHR13048">
    <property type="entry name" value="TRAFFICKING PROTEIN PARTICLE COMPLEX SUBUNIT 3"/>
    <property type="match status" value="1"/>
</dbReference>
<dbReference type="Pfam" id="PF04051">
    <property type="entry name" value="TRAPP"/>
    <property type="match status" value="1"/>
</dbReference>
<dbReference type="PIRSF" id="PIRSF018293">
    <property type="entry name" value="TRAPP_I_complex_Bet3"/>
    <property type="match status" value="1"/>
</dbReference>
<dbReference type="SUPFAM" id="SSF111126">
    <property type="entry name" value="Ligand-binding domain in the NO signalling and Golgi transport"/>
    <property type="match status" value="1"/>
</dbReference>
<comment type="function">
    <text evidence="1 2">May play a role in vesicular transport from endoplasmic reticulum to Golgi. Required for the systemic spread of the RNAi response.</text>
</comment>
<comment type="subunit">
    <text evidence="1">Homodimer. Part of the multisubunit TRAPP (transport protein particle) complex.</text>
</comment>
<comment type="subcellular location">
    <subcellularLocation>
        <location evidence="3">Golgi apparatus</location>
        <location evidence="3">cis-Golgi network</location>
    </subcellularLocation>
    <subcellularLocation>
        <location evidence="4">Endoplasmic reticulum</location>
    </subcellularLocation>
</comment>
<comment type="similarity">
    <text evidence="5">Belongs to the TRAPP small subunits family. BET3 subfamily.</text>
</comment>
<gene>
    <name evidence="6" type="primary">trpp-3</name>
    <name evidence="6" type="ORF">CBG10062</name>
</gene>
<reference key="1">
    <citation type="journal article" date="2003" name="PLoS Biol.">
        <title>The genome sequence of Caenorhabditis briggsae: a platform for comparative genomics.</title>
        <authorList>
            <person name="Stein L.D."/>
            <person name="Bao Z."/>
            <person name="Blasiar D."/>
            <person name="Blumenthal T."/>
            <person name="Brent M.R."/>
            <person name="Chen N."/>
            <person name="Chinwalla A."/>
            <person name="Clarke L."/>
            <person name="Clee C."/>
            <person name="Coghlan A."/>
            <person name="Coulson A."/>
            <person name="D'Eustachio P."/>
            <person name="Fitch D.H.A."/>
            <person name="Fulton L.A."/>
            <person name="Fulton R.E."/>
            <person name="Griffiths-Jones S."/>
            <person name="Harris T.W."/>
            <person name="Hillier L.W."/>
            <person name="Kamath R."/>
            <person name="Kuwabara P.E."/>
            <person name="Mardis E.R."/>
            <person name="Marra M.A."/>
            <person name="Miner T.L."/>
            <person name="Minx P."/>
            <person name="Mullikin J.C."/>
            <person name="Plumb R.W."/>
            <person name="Rogers J."/>
            <person name="Schein J.E."/>
            <person name="Sohrmann M."/>
            <person name="Spieth J."/>
            <person name="Stajich J.E."/>
            <person name="Wei C."/>
            <person name="Willey D."/>
            <person name="Wilson R.K."/>
            <person name="Durbin R.M."/>
            <person name="Waterston R.H."/>
        </authorList>
    </citation>
    <scope>NUCLEOTIDE SEQUENCE [LARGE SCALE GENOMIC DNA]</scope>
    <source>
        <strain>AF16</strain>
    </source>
</reference>